<proteinExistence type="evidence at protein level"/>
<reference key="1">
    <citation type="journal article" date="1996" name="Nat. Genet.">
        <title>A gene (RPGR) with homology to the RCC1 guanine nucleotide exchange factor is mutated in X-linked retinitis pigmentosa (RP3).</title>
        <authorList>
            <person name="Meindl A."/>
            <person name="Dry K.L."/>
            <person name="Herrmann K."/>
            <person name="Manson F.D."/>
            <person name="Ciccodicola A."/>
            <person name="Edgar A.J."/>
            <person name="Carvalho M.R.S."/>
            <person name="Achatz H."/>
            <person name="Hellebrand H."/>
            <person name="Lennon A.A."/>
            <person name="Migliaccio C."/>
            <person name="Porter K."/>
            <person name="Zrenner E."/>
            <person name="Bird A.C."/>
            <person name="Jay M."/>
            <person name="Lorenz B."/>
            <person name="Wittwer B."/>
            <person name="D'Urso M."/>
            <person name="Meitinger T."/>
            <person name="Wright A.F."/>
        </authorList>
    </citation>
    <scope>NUCLEOTIDE SEQUENCE [MRNA] (ISOFORMS 2 AND 4)</scope>
    <scope>VARIANTS RP3 GLN-98; VAL-215; ARG-250 AND 296-THR--ILE-300 DEL</scope>
</reference>
<reference key="2">
    <citation type="journal article" date="1996" name="Hum. Mol. Genet.">
        <title>Positional cloning of the gene for X-linked retinitis pigmentosa 3: homology with the guanine-nucleotide-exchange factor RCC1.</title>
        <authorList>
            <person name="Roepman R."/>
            <person name="van Duijnhoven G."/>
            <person name="Rosenberg T."/>
            <person name="Pinckers A.J.L.G."/>
            <person name="Bleeker-Wagemakers L.M."/>
            <person name="Bergen A.A.B."/>
            <person name="Post J."/>
            <person name="Beck A."/>
            <person name="Reinhardt R."/>
            <person name="Ropers H.-H."/>
            <person name="Cremers F."/>
            <person name="Berger W."/>
        </authorList>
    </citation>
    <scope>NUCLEOTIDE SEQUENCE [MRNA] (ISOFORM 2)</scope>
    <scope>VARIANTS RP3 CYS-130; SER-235 AND SER-275</scope>
    <source>
        <tissue>Retina</tissue>
    </source>
</reference>
<reference key="3">
    <citation type="submission" date="1996-08" db="EMBL/GenBank/DDBJ databases">
        <authorList>
            <person name="Berger W."/>
        </authorList>
    </citation>
    <scope>SEQUENCE REVISION</scope>
</reference>
<reference key="4">
    <citation type="journal article" date="1999" name="Hum. Mol. Genet.">
        <title>RPGR transcription studies in mouse and human tissues reveal a retina-specific isoform that is disrupted in a patient with X-linked retinitis pigmentosa.</title>
        <authorList>
            <person name="Kirschner R."/>
            <person name="Rosenberg T."/>
            <person name="Schultz-Heienbrok R."/>
            <person name="Lenzner S."/>
            <person name="Feil S."/>
            <person name="Roepman R."/>
            <person name="Cremers F.P.M."/>
            <person name="Ropers H.-H."/>
            <person name="Berger W."/>
        </authorList>
    </citation>
    <scope>NUCLEOTIDE SEQUENCE [MRNA] (ISOFORMS 2 AND 3)</scope>
    <source>
        <tissue>Retina</tissue>
    </source>
</reference>
<reference key="5">
    <citation type="journal article" date="2001" name="Hum. Genet.">
        <title>DNA sequence comparison of human and mouse retinitis pigmentosa GTPase regulator (RPGR) identifies tissue-specific exons and putative regulatory elements.</title>
        <authorList>
            <person name="Kirschner R."/>
            <person name="Erturk D."/>
            <person name="Zeitz C."/>
            <person name="Sahin S."/>
            <person name="Ramser J."/>
            <person name="Cremers F.P.M."/>
            <person name="Ropers H.-H."/>
            <person name="Berger W."/>
        </authorList>
    </citation>
    <scope>NUCLEOTIDE SEQUENCE [GENOMIC DNA] (ISOFORM 2)</scope>
</reference>
<reference key="6">
    <citation type="journal article" date="2005" name="Nature">
        <title>The DNA sequence of the human X chromosome.</title>
        <authorList>
            <person name="Ross M.T."/>
            <person name="Grafham D.V."/>
            <person name="Coffey A.J."/>
            <person name="Scherer S."/>
            <person name="McLay K."/>
            <person name="Muzny D."/>
            <person name="Platzer M."/>
            <person name="Howell G.R."/>
            <person name="Burrows C."/>
            <person name="Bird C.P."/>
            <person name="Frankish A."/>
            <person name="Lovell F.L."/>
            <person name="Howe K.L."/>
            <person name="Ashurst J.L."/>
            <person name="Fulton R.S."/>
            <person name="Sudbrak R."/>
            <person name="Wen G."/>
            <person name="Jones M.C."/>
            <person name="Hurles M.E."/>
            <person name="Andrews T.D."/>
            <person name="Scott C.E."/>
            <person name="Searle S."/>
            <person name="Ramser J."/>
            <person name="Whittaker A."/>
            <person name="Deadman R."/>
            <person name="Carter N.P."/>
            <person name="Hunt S.E."/>
            <person name="Chen R."/>
            <person name="Cree A."/>
            <person name="Gunaratne P."/>
            <person name="Havlak P."/>
            <person name="Hodgson A."/>
            <person name="Metzker M.L."/>
            <person name="Richards S."/>
            <person name="Scott G."/>
            <person name="Steffen D."/>
            <person name="Sodergren E."/>
            <person name="Wheeler D.A."/>
            <person name="Worley K.C."/>
            <person name="Ainscough R."/>
            <person name="Ambrose K.D."/>
            <person name="Ansari-Lari M.A."/>
            <person name="Aradhya S."/>
            <person name="Ashwell R.I."/>
            <person name="Babbage A.K."/>
            <person name="Bagguley C.L."/>
            <person name="Ballabio A."/>
            <person name="Banerjee R."/>
            <person name="Barker G.E."/>
            <person name="Barlow K.F."/>
            <person name="Barrett I.P."/>
            <person name="Bates K.N."/>
            <person name="Beare D.M."/>
            <person name="Beasley H."/>
            <person name="Beasley O."/>
            <person name="Beck A."/>
            <person name="Bethel G."/>
            <person name="Blechschmidt K."/>
            <person name="Brady N."/>
            <person name="Bray-Allen S."/>
            <person name="Bridgeman A.M."/>
            <person name="Brown A.J."/>
            <person name="Brown M.J."/>
            <person name="Bonnin D."/>
            <person name="Bruford E.A."/>
            <person name="Buhay C."/>
            <person name="Burch P."/>
            <person name="Burford D."/>
            <person name="Burgess J."/>
            <person name="Burrill W."/>
            <person name="Burton J."/>
            <person name="Bye J.M."/>
            <person name="Carder C."/>
            <person name="Carrel L."/>
            <person name="Chako J."/>
            <person name="Chapman J.C."/>
            <person name="Chavez D."/>
            <person name="Chen E."/>
            <person name="Chen G."/>
            <person name="Chen Y."/>
            <person name="Chen Z."/>
            <person name="Chinault C."/>
            <person name="Ciccodicola A."/>
            <person name="Clark S.Y."/>
            <person name="Clarke G."/>
            <person name="Clee C.M."/>
            <person name="Clegg S."/>
            <person name="Clerc-Blankenburg K."/>
            <person name="Clifford K."/>
            <person name="Cobley V."/>
            <person name="Cole C.G."/>
            <person name="Conquer J.S."/>
            <person name="Corby N."/>
            <person name="Connor R.E."/>
            <person name="David R."/>
            <person name="Davies J."/>
            <person name="Davis C."/>
            <person name="Davis J."/>
            <person name="Delgado O."/>
            <person name="Deshazo D."/>
            <person name="Dhami P."/>
            <person name="Ding Y."/>
            <person name="Dinh H."/>
            <person name="Dodsworth S."/>
            <person name="Draper H."/>
            <person name="Dugan-Rocha S."/>
            <person name="Dunham A."/>
            <person name="Dunn M."/>
            <person name="Durbin K.J."/>
            <person name="Dutta I."/>
            <person name="Eades T."/>
            <person name="Ellwood M."/>
            <person name="Emery-Cohen A."/>
            <person name="Errington H."/>
            <person name="Evans K.L."/>
            <person name="Faulkner L."/>
            <person name="Francis F."/>
            <person name="Frankland J."/>
            <person name="Fraser A.E."/>
            <person name="Galgoczy P."/>
            <person name="Gilbert J."/>
            <person name="Gill R."/>
            <person name="Gloeckner G."/>
            <person name="Gregory S.G."/>
            <person name="Gribble S."/>
            <person name="Griffiths C."/>
            <person name="Grocock R."/>
            <person name="Gu Y."/>
            <person name="Gwilliam R."/>
            <person name="Hamilton C."/>
            <person name="Hart E.A."/>
            <person name="Hawes A."/>
            <person name="Heath P.D."/>
            <person name="Heitmann K."/>
            <person name="Hennig S."/>
            <person name="Hernandez J."/>
            <person name="Hinzmann B."/>
            <person name="Ho S."/>
            <person name="Hoffs M."/>
            <person name="Howden P.J."/>
            <person name="Huckle E.J."/>
            <person name="Hume J."/>
            <person name="Hunt P.J."/>
            <person name="Hunt A.R."/>
            <person name="Isherwood J."/>
            <person name="Jacob L."/>
            <person name="Johnson D."/>
            <person name="Jones S."/>
            <person name="de Jong P.J."/>
            <person name="Joseph S.S."/>
            <person name="Keenan S."/>
            <person name="Kelly S."/>
            <person name="Kershaw J.K."/>
            <person name="Khan Z."/>
            <person name="Kioschis P."/>
            <person name="Klages S."/>
            <person name="Knights A.J."/>
            <person name="Kosiura A."/>
            <person name="Kovar-Smith C."/>
            <person name="Laird G.K."/>
            <person name="Langford C."/>
            <person name="Lawlor S."/>
            <person name="Leversha M."/>
            <person name="Lewis L."/>
            <person name="Liu W."/>
            <person name="Lloyd C."/>
            <person name="Lloyd D.M."/>
            <person name="Loulseged H."/>
            <person name="Loveland J.E."/>
            <person name="Lovell J.D."/>
            <person name="Lozado R."/>
            <person name="Lu J."/>
            <person name="Lyne R."/>
            <person name="Ma J."/>
            <person name="Maheshwari M."/>
            <person name="Matthews L.H."/>
            <person name="McDowall J."/>
            <person name="McLaren S."/>
            <person name="McMurray A."/>
            <person name="Meidl P."/>
            <person name="Meitinger T."/>
            <person name="Milne S."/>
            <person name="Miner G."/>
            <person name="Mistry S.L."/>
            <person name="Morgan M."/>
            <person name="Morris S."/>
            <person name="Mueller I."/>
            <person name="Mullikin J.C."/>
            <person name="Nguyen N."/>
            <person name="Nordsiek G."/>
            <person name="Nyakatura G."/>
            <person name="O'dell C.N."/>
            <person name="Okwuonu G."/>
            <person name="Palmer S."/>
            <person name="Pandian R."/>
            <person name="Parker D."/>
            <person name="Parrish J."/>
            <person name="Pasternak S."/>
            <person name="Patel D."/>
            <person name="Pearce A.V."/>
            <person name="Pearson D.M."/>
            <person name="Pelan S.E."/>
            <person name="Perez L."/>
            <person name="Porter K.M."/>
            <person name="Ramsey Y."/>
            <person name="Reichwald K."/>
            <person name="Rhodes S."/>
            <person name="Ridler K.A."/>
            <person name="Schlessinger D."/>
            <person name="Schueler M.G."/>
            <person name="Sehra H.K."/>
            <person name="Shaw-Smith C."/>
            <person name="Shen H."/>
            <person name="Sheridan E.M."/>
            <person name="Shownkeen R."/>
            <person name="Skuce C.D."/>
            <person name="Smith M.L."/>
            <person name="Sotheran E.C."/>
            <person name="Steingruber H.E."/>
            <person name="Steward C.A."/>
            <person name="Storey R."/>
            <person name="Swann R.M."/>
            <person name="Swarbreck D."/>
            <person name="Tabor P.E."/>
            <person name="Taudien S."/>
            <person name="Taylor T."/>
            <person name="Teague B."/>
            <person name="Thomas K."/>
            <person name="Thorpe A."/>
            <person name="Timms K."/>
            <person name="Tracey A."/>
            <person name="Trevanion S."/>
            <person name="Tromans A.C."/>
            <person name="d'Urso M."/>
            <person name="Verduzco D."/>
            <person name="Villasana D."/>
            <person name="Waldron L."/>
            <person name="Wall M."/>
            <person name="Wang Q."/>
            <person name="Warren J."/>
            <person name="Warry G.L."/>
            <person name="Wei X."/>
            <person name="West A."/>
            <person name="Whitehead S.L."/>
            <person name="Whiteley M.N."/>
            <person name="Wilkinson J.E."/>
            <person name="Willey D.L."/>
            <person name="Williams G."/>
            <person name="Williams L."/>
            <person name="Williamson A."/>
            <person name="Williamson H."/>
            <person name="Wilming L."/>
            <person name="Woodmansey R.L."/>
            <person name="Wray P.W."/>
            <person name="Yen J."/>
            <person name="Zhang J."/>
            <person name="Zhou J."/>
            <person name="Zoghbi H."/>
            <person name="Zorilla S."/>
            <person name="Buck D."/>
            <person name="Reinhardt R."/>
            <person name="Poustka A."/>
            <person name="Rosenthal A."/>
            <person name="Lehrach H."/>
            <person name="Meindl A."/>
            <person name="Minx P.J."/>
            <person name="Hillier L.W."/>
            <person name="Willard H.F."/>
            <person name="Wilson R.K."/>
            <person name="Waterston R.H."/>
            <person name="Rice C.M."/>
            <person name="Vaudin M."/>
            <person name="Coulson A."/>
            <person name="Nelson D.L."/>
            <person name="Weinstock G."/>
            <person name="Sulston J.E."/>
            <person name="Durbin R.M."/>
            <person name="Hubbard T."/>
            <person name="Gibbs R.A."/>
            <person name="Beck S."/>
            <person name="Rogers J."/>
            <person name="Bentley D.R."/>
        </authorList>
    </citation>
    <scope>NUCLEOTIDE SEQUENCE [LARGE SCALE GENOMIC DNA]</scope>
</reference>
<reference key="7">
    <citation type="submission" date="2005-09" db="EMBL/GenBank/DDBJ databases">
        <authorList>
            <person name="Mural R.J."/>
            <person name="Istrail S."/>
            <person name="Sutton G.G."/>
            <person name="Florea L."/>
            <person name="Halpern A.L."/>
            <person name="Mobarry C.M."/>
            <person name="Lippert R."/>
            <person name="Walenz B."/>
            <person name="Shatkay H."/>
            <person name="Dew I."/>
            <person name="Miller J.R."/>
            <person name="Flanigan M.J."/>
            <person name="Edwards N.J."/>
            <person name="Bolanos R."/>
            <person name="Fasulo D."/>
            <person name="Halldorsson B.V."/>
            <person name="Hannenhalli S."/>
            <person name="Turner R."/>
            <person name="Yooseph S."/>
            <person name="Lu F."/>
            <person name="Nusskern D.R."/>
            <person name="Shue B.C."/>
            <person name="Zheng X.H."/>
            <person name="Zhong F."/>
            <person name="Delcher A.L."/>
            <person name="Huson D.H."/>
            <person name="Kravitz S.A."/>
            <person name="Mouchard L."/>
            <person name="Reinert K."/>
            <person name="Remington K.A."/>
            <person name="Clark A.G."/>
            <person name="Waterman M.S."/>
            <person name="Eichler E.E."/>
            <person name="Adams M.D."/>
            <person name="Hunkapiller M.W."/>
            <person name="Myers E.W."/>
            <person name="Venter J.C."/>
        </authorList>
    </citation>
    <scope>NUCLEOTIDE SEQUENCE [LARGE SCALE GENOMIC DNA]</scope>
</reference>
<reference key="8">
    <citation type="journal article" date="2004" name="Genome Res.">
        <title>The status, quality, and expansion of the NIH full-length cDNA project: the Mammalian Gene Collection (MGC).</title>
        <authorList>
            <consortium name="The MGC Project Team"/>
        </authorList>
    </citation>
    <scope>NUCLEOTIDE SEQUENCE [LARGE SCALE MRNA] (ISOFORM 5)</scope>
</reference>
<reference key="9">
    <citation type="journal article" date="2000" name="Nat. Genet.">
        <title>Mutational hot spot within a new RPGR exon in X-linked retinitis pigmentosa.</title>
        <authorList>
            <person name="Vervoort R."/>
            <person name="Lennon A.A."/>
            <person name="Bird A.C."/>
            <person name="Tulloch B."/>
            <person name="Axton R."/>
            <person name="Miano M.G."/>
            <person name="Meindl A."/>
            <person name="Meitinger T."/>
            <person name="Ciccodicola A."/>
            <person name="Wright A.F."/>
        </authorList>
    </citation>
    <scope>NUCLEOTIDE SEQUENCE [GENOMIC DNA] OF 525-840 (ISOFORM 1)</scope>
    <scope>VARIANTS RP3 GLN-98 AND ARG-250</scope>
</reference>
<reference key="10">
    <citation type="journal article" date="1999" name="Proc. Natl. Acad. Sci. U.S.A.">
        <title>The retinitis pigmentosa GTPase regulator, RPGR, interacts with the delta subunit of rod cyclic GMP phosphodiesterase.</title>
        <authorList>
            <person name="Linari M."/>
            <person name="Ueffing M."/>
            <person name="Manson F."/>
            <person name="Wright A."/>
            <person name="Meitinger T."/>
            <person name="Becker J."/>
        </authorList>
    </citation>
    <scope>INTERACTION WITH PDE6D</scope>
    <scope>CHARACTERIZATION OF RP3 VARIANTS GLN-98; CYS-130; VAL-215; SER-235; ARG-250 AND SER-275</scope>
    <scope>MUTAGENESIS OF VAL-36</scope>
</reference>
<reference key="11">
    <citation type="journal article" date="2000" name="Am. J. Hum. Genet.">
        <title>Remapping of the RP15 locus for X-linked cone-rod degeneration to Xp11.4-p21.1, and identification of a de novo insertion in the RPGR exon ORF15.</title>
        <authorList>
            <person name="Mears A.J."/>
            <person name="Hiriyanna S."/>
            <person name="Vervoort R."/>
            <person name="Yashar B."/>
            <person name="Gieser L."/>
            <person name="Fahrner S."/>
            <person name="Daiger S.P."/>
            <person name="Heckenlively J.R."/>
            <person name="Sieving P.A."/>
            <person name="Wright A.F."/>
            <person name="Swaroop A."/>
        </authorList>
    </citation>
    <scope>INVOLVEMENT IN RP3/RP15</scope>
</reference>
<reference key="12">
    <citation type="journal article" date="2000" name="Hum. Mol. Genet.">
        <title>The retinitis pigmentosa GTPase regulator (RPGR) interacts with novel transport-like proteins in the outer segments of rod photoreceptors.</title>
        <authorList>
            <person name="Roepman R."/>
            <person name="Bernoud-Hubac N."/>
            <person name="Schick D.E."/>
            <person name="Maugeri A."/>
            <person name="Berger W."/>
            <person name="Ropers H.-H."/>
            <person name="Cremers F.P.M."/>
            <person name="Ferreira P.A."/>
        </authorList>
    </citation>
    <scope>INTERACTION WITH RPGRIP1</scope>
</reference>
<reference key="13">
    <citation type="journal article" date="2002" name="Am. J. Hum. Genet.">
        <title>X-linked cone-rod dystrophy (locus COD1): identification of mutations in RPGR exon ORF15.</title>
        <authorList>
            <person name="Demirci F.Y.K."/>
            <person name="Rigatti B.W."/>
            <person name="Wen G."/>
            <person name="Radak A.L."/>
            <person name="Mah T.S."/>
            <person name="Baic C.L."/>
            <person name="Traboulsi E.I."/>
            <person name="Alitalo T."/>
            <person name="Ramser J."/>
            <person name="Gorin M.B."/>
        </authorList>
    </citation>
    <scope>INVOLVEMENT IN CORDX1</scope>
    <scope>VARIANT ASP-345</scope>
</reference>
<reference key="14">
    <citation type="journal article" date="2002" name="Genomics">
        <title>X-linked recessive atrophic macular degeneration from RPGR mutation.</title>
        <authorList>
            <person name="Ayyagari R."/>
            <person name="Demirci F.Y."/>
            <person name="Liu J."/>
            <person name="Bingham E.L."/>
            <person name="Stringham H."/>
            <person name="Kakuk L.E."/>
            <person name="Boehnke M."/>
            <person name="Gorin M.B."/>
            <person name="Richards J.E."/>
            <person name="Sieving P.A."/>
        </authorList>
    </citation>
    <scope>INVOLVEMENT IN MDXLA</scope>
</reference>
<reference key="15">
    <citation type="journal article" date="2002" name="Hum. Mol. Genet.">
        <title>Species-specific subcellular localization of RPGR and RPGRIP isoforms: implications for the phenotypic variability of congenital retinopathies among species.</title>
        <authorList>
            <person name="Mavlyutov T.A."/>
            <person name="Zhao H."/>
            <person name="Ferreira P.A."/>
        </authorList>
    </citation>
    <scope>TISSUE SPECIFICITY</scope>
</reference>
<reference key="16">
    <citation type="journal article" date="2003" name="J. Med. Genet.">
        <title>RPGR mutation associated with retinitis pigmentosa, impaired hearing, and sinorespiratory infections.</title>
        <authorList>
            <person name="Zito I."/>
            <person name="Downes S.M."/>
            <person name="Patel R.J."/>
            <person name="Cheetham M.E."/>
            <person name="Ebenezer N.D."/>
            <person name="Jenkins S.A."/>
            <person name="Bhattacharya S.S."/>
            <person name="Webster A.R."/>
            <person name="Holder G.E."/>
            <person name="Bird A.C."/>
            <person name="Bamiou D.E."/>
            <person name="Hardcastle A.J."/>
        </authorList>
    </citation>
    <scope>INVOLVEMENT IN RPSRDF</scope>
</reference>
<reference key="17">
    <citation type="journal article" date="2005" name="Hum. Mol. Genet.">
        <title>RPGR ORF15 isoform co-localizes with RPGRIP1 at centrioles and basal bodies and interacts with nucleophosmin.</title>
        <authorList>
            <person name="Shu X."/>
            <person name="Fry A.M."/>
            <person name="Tulloch B."/>
            <person name="Manson F.D."/>
            <person name="Crabb J.W."/>
            <person name="Khanna H."/>
            <person name="Faragher A.J."/>
            <person name="Lennon A."/>
            <person name="He S."/>
            <person name="Trojan P."/>
            <person name="Giessl A."/>
            <person name="Wolfrum U."/>
            <person name="Vervoort R."/>
            <person name="Swaroop A."/>
            <person name="Wright A.F."/>
        </authorList>
    </citation>
    <scope>ALTERNATIVE SPLICING (ISOFORM 6)</scope>
    <scope>INTERACTION WITH NPM1</scope>
    <scope>SUBCELLULAR LOCATION</scope>
</reference>
<reference key="18">
    <citation type="journal article" date="2005" name="J. Biol. Chem.">
        <title>RPGR-ORF15, which is mutated in retinitis pigmentosa, associates with SMC1, SMC3, and microtubule transport proteins.</title>
        <authorList>
            <person name="Khanna H."/>
            <person name="Hurd T.W."/>
            <person name="Lillo C."/>
            <person name="Shu X."/>
            <person name="Parapuram S.K."/>
            <person name="He S."/>
            <person name="Akimoto M."/>
            <person name="Wright A.F."/>
            <person name="Margolis B."/>
            <person name="Williams D.S."/>
            <person name="Swaroop A."/>
        </authorList>
    </citation>
    <scope>INTERACTION WITH SMCA1 AND SMC3</scope>
</reference>
<reference key="19">
    <citation type="journal article" date="2009" name="Anal. Chem.">
        <title>Lys-N and trypsin cover complementary parts of the phosphoproteome in a refined SCX-based approach.</title>
        <authorList>
            <person name="Gauci S."/>
            <person name="Helbig A.O."/>
            <person name="Slijper M."/>
            <person name="Krijgsveld J."/>
            <person name="Heck A.J."/>
            <person name="Mohammed S."/>
        </authorList>
    </citation>
    <scope>IDENTIFICATION BY MASS SPECTROMETRY [LARGE SCALE ANALYSIS]</scope>
</reference>
<reference key="20">
    <citation type="journal article" date="2009" name="Nat. Genet.">
        <title>A common allele in RPGRIP1L is a modifier of retinal degeneration in ciliopathies.</title>
        <authorList>
            <person name="Khanna H."/>
            <person name="Davis E.E."/>
            <person name="Murga-Zamalloa C.A."/>
            <person name="Estrada-Cuzcano A."/>
            <person name="Lopez I."/>
            <person name="den Hollander A.I."/>
            <person name="Zonneveld M.N."/>
            <person name="Othman M.I."/>
            <person name="Waseem N."/>
            <person name="Chakarova C.F."/>
            <person name="Maubaret C."/>
            <person name="Diaz-Font A."/>
            <person name="MacDonald I."/>
            <person name="Muzny D.M."/>
            <person name="Wheeler D.A."/>
            <person name="Morgan M."/>
            <person name="Lewis L.R."/>
            <person name="Logan C.V."/>
            <person name="Tan P.L."/>
            <person name="Beer M.A."/>
            <person name="Inglehearn C.F."/>
            <person name="Lewis R.A."/>
            <person name="Jacobson S.G."/>
            <person name="Bergmann C."/>
            <person name="Beales P.L."/>
            <person name="Attie-Bitach T."/>
            <person name="Johnson C.A."/>
            <person name="Otto E.A."/>
            <person name="Bhattacharya S.S."/>
            <person name="Hildebrandt F."/>
            <person name="Gibbs R.A."/>
            <person name="Koenekoop R.K."/>
            <person name="Swaroop A."/>
            <person name="Katsanis N."/>
        </authorList>
    </citation>
    <scope>INTERACTION WITH RPGRIP1L</scope>
</reference>
<reference key="21">
    <citation type="journal article" date="2010" name="Hum. Mol. Genet.">
        <title>Interaction of retinitis pigmentosa GTPase regulator (RPGR) with RAB8A GTPase: implications for cilia dysfunction and photoreceptor degeneration.</title>
        <authorList>
            <person name="Murga-Zamalloa C.A."/>
            <person name="Atkins S.J."/>
            <person name="Peranen J."/>
            <person name="Swaroop A."/>
            <person name="Khanna H."/>
        </authorList>
    </citation>
    <scope>FUNCTION</scope>
    <scope>INTERACTION WITH RAB8A</scope>
    <scope>CHARACTERIZATION OF VARIANTS RP3 VAL-60; GLN-98; ASN-99 AND CYS-130</scope>
</reference>
<reference key="22">
    <citation type="journal article" date="2011" name="Hum. Mol. Genet.">
        <title>The role of RPGR in cilia formation and actin stability.</title>
        <authorList>
            <person name="Gakovic M."/>
            <person name="Shu X."/>
            <person name="Kasioulis I."/>
            <person name="Carpanini S."/>
            <person name="Moraga I."/>
            <person name="Wright A.F."/>
        </authorList>
    </citation>
    <scope>FUNCTION</scope>
</reference>
<reference key="23">
    <citation type="journal article" date="2013" name="J. Proteome Res.">
        <title>Toward a comprehensive characterization of a human cancer cell phosphoproteome.</title>
        <authorList>
            <person name="Zhou H."/>
            <person name="Di Palma S."/>
            <person name="Preisinger C."/>
            <person name="Peng M."/>
            <person name="Polat A.N."/>
            <person name="Heck A.J."/>
            <person name="Mohammed S."/>
        </authorList>
    </citation>
    <scope>PHOSPHORYLATION [LARGE SCALE ANALYSIS] AT SER-418 AND SER-518</scope>
    <scope>IDENTIFICATION BY MASS SPECTROMETRY [LARGE SCALE ANALYSIS]</scope>
    <source>
        <tissue>Cervix carcinoma</tissue>
        <tissue>Erythroleukemia</tissue>
    </source>
</reference>
<reference key="24">
    <citation type="journal article" date="2013" name="EMBO Rep.">
        <title>The interplay between RPGR, PDE? and Arl2/3 regulate the ciliary targeting of farnesylated cargo.</title>
        <authorList>
            <person name="Watzlich D."/>
            <person name="Vetter I."/>
            <person name="Gotthardt K."/>
            <person name="Miertzschke M."/>
            <person name="Chen Y.X."/>
            <person name="Wittinghofer A."/>
            <person name="Ismail S."/>
        </authorList>
    </citation>
    <scope>X-RAY CRYSTALLOGRAPHY (1.70 ANGSTROMS) OF 1-392</scope>
    <scope>INTERACTION WITH PDE6D</scope>
</reference>
<reference key="25">
    <citation type="journal article" date="2014" name="Cell Rep.">
        <title>C2 domains as protein-protein interaction modules in the ciliary transition zone.</title>
        <authorList>
            <person name="Remans K."/>
            <person name="Burger M."/>
            <person name="Vetter I.R."/>
            <person name="Wittinghofer A."/>
        </authorList>
    </citation>
    <scope>X-RAY CRYSTALLOGRAPHY (1.83 ANGSTROMS) OF 1-392 IN COMPLEX WITH RPGRIP1</scope>
    <scope>INTERACTION WITH RPGRIP1; RPGRIP1L AND PDE6D</scope>
    <scope>DOMAIN</scope>
    <scope>MUTAGENESIS OF ARG-323</scope>
    <scope>CHARACTERIZATION OF VARIANT RP3 ARG-320</scope>
</reference>
<reference key="26">
    <citation type="journal article" date="1997" name="Am. J. Hum. Genet.">
        <title>Spectrum of mutations in the RPGR gene that are identified in 20% of families with X-linked retinitis pigmentosa.</title>
        <authorList>
            <person name="Buraczynska M."/>
            <person name="Wu W."/>
            <person name="Fujita R."/>
            <person name="Buraczynska K."/>
            <person name="Phelps E."/>
            <person name="Andreasson S."/>
            <person name="Bennett J."/>
            <person name="Birch D.G."/>
            <person name="Fishman G.A."/>
            <person name="Hoffman D.R."/>
            <person name="Inana G."/>
            <person name="Jacobson S.G."/>
            <person name="Musarella M.A."/>
            <person name="Sieving P.A."/>
            <person name="Swaroop A."/>
        </authorList>
    </citation>
    <scope>VARIANTS RP3 VAL-60; VAL-75 AND GLY-262</scope>
    <scope>VARIANTS LYS-425; VAL-431 AND GLU-566</scope>
</reference>
<reference key="27">
    <citation type="journal article" date="1998" name="Ophthalmology">
        <title>X-linked retinitis pigmentosa in two families with a missense mutation in the RPGR gene and putative change of glycine to valine at codon 60.</title>
        <authorList>
            <person name="Fishman G.A."/>
            <person name="Grover S."/>
            <person name="Jacobson S.G."/>
            <person name="Alexander K.R."/>
            <person name="Derlacki D.J."/>
            <person name="Wu W."/>
            <person name="Buraczynska M."/>
            <person name="Swaroop A."/>
        </authorList>
    </citation>
    <scope>VARIANT RP3 VAL-60</scope>
</reference>
<reference key="28">
    <citation type="journal article" date="1999" name="Eur. J. Hum. Genet.">
        <title>Mutation analysis of the RPGR gene reveals novel mutations in south European patients with X-linked retinitis pigmentosa.</title>
        <authorList>
            <person name="Miano M.G."/>
            <person name="Testa F."/>
            <person name="Strazzullo M."/>
            <person name="Trujillo M."/>
            <person name="De Bernardo C."/>
            <person name="Grammatico B."/>
            <person name="Simonelli F."/>
            <person name="Mangino M."/>
            <person name="Torrente I."/>
            <person name="Ruberto G."/>
            <person name="Beneyto M."/>
            <person name="Antinolo G."/>
            <person name="Rinaldi E."/>
            <person name="Danesino C."/>
            <person name="Ventruto V."/>
            <person name="D'Urso M."/>
            <person name="Ayuso C."/>
            <person name="Baiget M."/>
            <person name="Ciccodicola A."/>
        </authorList>
    </citation>
    <scope>VARIANTS RP3 ASN-99 AND VAL-289</scope>
</reference>
<reference key="29">
    <citation type="journal article" date="1999" name="Hum. Genet.">
        <title>Identification of novel RPGR (retinitis pigmentosa GTPase regulator) mutations in a subset of X-linked retinitis pigmentosa families segregating with the RP3 locus.</title>
        <authorList>
            <person name="Zito I."/>
            <person name="Thiselton D.L."/>
            <person name="Gorin M.B."/>
            <person name="Stout J.T."/>
            <person name="Plant C."/>
            <person name="Bird A.C."/>
            <person name="Bhattacharya S.S."/>
            <person name="Hardcastle A.J."/>
        </authorList>
    </citation>
    <scope>VARIANTS ILE-76; LYS-425 AND GLU-566</scope>
</reference>
<reference key="30">
    <citation type="journal article" date="2000" name="Hum. Mutat.">
        <title>Novel mutations of the RPGR gene in RP3 families.</title>
        <authorList>
            <person name="Zito I."/>
            <person name="Gorin M.B."/>
            <person name="Plant C."/>
            <person name="Bird A.C."/>
            <person name="Bhattacharya S.S."/>
            <person name="Hardcastle A.J."/>
        </authorList>
    </citation>
    <scope>VARIANT RP3 ARG-302</scope>
</reference>
<reference key="31">
    <citation type="journal article" date="2000" name="Hum. Mutat.">
        <title>Sequence variation within the RPGR gene: evidence for a founder complex allele.</title>
        <authorList>
            <person name="Zito I."/>
            <person name="Morris A."/>
            <person name="Tyson P."/>
            <person name="Winship I."/>
            <person name="Sharp D."/>
            <person name="Gilbert D."/>
            <person name="Thiselton D.L."/>
            <person name="Bhattacharya S.S."/>
            <person name="Hardcastle A.J."/>
        </authorList>
    </citation>
    <scope>VARIANTS LYS-425; GLN-526 DEL; MET-533 AND GLU-566</scope>
</reference>
<reference key="32">
    <citation type="journal article" date="2000" name="Invest. Ophthalmol. Vis. Sci.">
        <title>X-linked retinitis pigmentosa: mutation spectrum of the RPGR and RP2 genes and correlation with visual function.</title>
        <authorList>
            <person name="Sharon D."/>
            <person name="Bruns G.A.P."/>
            <person name="McGee T.L."/>
            <person name="Sandberg M.A."/>
            <person name="Berson E.L."/>
            <person name="Dryja T.P."/>
        </authorList>
    </citation>
    <scope>VARIANTS RP3 ARG-43; GLU-43; VAL-60; GLY-127; TYR-302 AND ASP-436</scope>
    <scope>VARIANTS ASP-345; LYS-425; VAL-431 AND GLU-566</scope>
</reference>
<reference key="33">
    <citation type="journal article" date="2001" name="Hum. Mutat.">
        <title>Five novel RPGR mutations in families with X-linked retinitis pigmentosa.</title>
        <authorList>
            <person name="Guevara-Fujita M."/>
            <person name="Fahrner S."/>
            <person name="Buraczynska K."/>
            <person name="Cook J."/>
            <person name="Wheaton D."/>
            <person name="Cortes F."/>
            <person name="Vicencio C."/>
            <person name="Pena M."/>
            <person name="Fishman G.A."/>
            <person name="Mintz-Hittner H."/>
            <person name="Birch D.G."/>
            <person name="Hoffman D.R."/>
            <person name="Mears A.J."/>
            <person name="Fujita R."/>
            <person name="Swaroop A."/>
        </authorList>
    </citation>
    <scope>VARIANT RP3 ASP-436</scope>
</reference>
<reference key="34">
    <citation type="journal article" date="2002" name="Am. J. Hum. Genet.">
        <title>A comprehensive mutation analysis of RP2 and RPGR in a North American cohort of families with X-linked retinitis pigmentosa.</title>
        <authorList>
            <person name="Breuer D.K."/>
            <person name="Yashar B.M."/>
            <person name="Filippova E."/>
            <person name="Hiriyanna S."/>
            <person name="Lyons R.H."/>
            <person name="Mears A.J."/>
            <person name="Asaye B."/>
            <person name="Acar C."/>
            <person name="Vervoort R."/>
            <person name="Wright A.F."/>
            <person name="Musarella M.A."/>
            <person name="Wheeler P."/>
            <person name="MacDonald I."/>
            <person name="Iannaccone A."/>
            <person name="Birch D."/>
            <person name="Hoffman D.R."/>
            <person name="Fishman G.A."/>
            <person name="Heckenlively J.R."/>
            <person name="Jacobson S.G."/>
            <person name="Sieving P.A."/>
            <person name="Swaroop A."/>
        </authorList>
    </citation>
    <scope>VARIANTS RP3 GLY-127; ARG-173; TYR-250; LEU-258 DEL; ARG-267; GLY-285 AND ASP-436</scope>
</reference>
<reference key="35">
    <citation type="journal article" date="2003" name="Am. J. Hum. Genet.">
        <title>RP2 and RPGR mutations and clinical correlations in patients with X-linked retinitis pigmentosa.</title>
        <authorList>
            <person name="Sharon D."/>
            <person name="Sandberg M.A."/>
            <person name="Rabe V.W."/>
            <person name="Stillberger M."/>
            <person name="Dryja T.P."/>
            <person name="Berson E.L."/>
        </authorList>
    </citation>
    <scope>VARIANTS RP3 ASN-312; TYR-312 AND ARG-320</scope>
</reference>
<reference key="36">
    <citation type="journal article" date="2003" name="Invest. Ophthalmol. Vis. Sci.">
        <title>X-linked retinitis pigmentosa: RPGR mutations in most families with definite X linkage and clustering of mutations in a short sequence stretch of exon ORF15.</title>
        <authorList>
            <person name="Bader I."/>
            <person name="Brandau O."/>
            <person name="Achatz H."/>
            <person name="Apfelstedt-Sylla E."/>
            <person name="Hergersberg M."/>
            <person name="Lorenz B."/>
            <person name="Wissinger B."/>
            <person name="Wittwer B."/>
            <person name="Rudolph G."/>
            <person name="Meindl A."/>
            <person name="Meitinger T."/>
        </authorList>
    </citation>
    <scope>VARIANTS RP3 LEU-152 AND VAL-215</scope>
</reference>
<reference key="37">
    <citation type="journal article" date="2003" name="J. Med. Genet.">
        <title>Clinical and immunohistochemical evidence for an X linked retinitis pigmentosa syndrome with recurrent infections and hearing loss in association with an RPGR mutation.</title>
        <authorList>
            <person name="Iannaccone A."/>
            <person name="Breuer D.K."/>
            <person name="Wang X.F."/>
            <person name="Kuo S.F."/>
            <person name="Normando E.M."/>
            <person name="Filippova E."/>
            <person name="Baldi A."/>
            <person name="Hiriyanna S."/>
            <person name="MacDonald C.B."/>
            <person name="Baldi F."/>
            <person name="Cosgrove D."/>
            <person name="Morton C.C."/>
            <person name="Swaroop A."/>
            <person name="Jablonski M.M."/>
        </authorList>
    </citation>
    <scope>VARIANT RPSRDF ARG-173</scope>
</reference>
<reference key="38">
    <citation type="journal article" date="2007" name="Hum. Mutat.">
        <title>Comprehensive survey of mutations in RP2 and RPGR in patients affected with distinct retinal dystrophies: genotype-phenotype correlations and impact on genetic counseling.</title>
        <authorList>
            <person name="Pelletier V."/>
            <person name="Jambou M."/>
            <person name="Delphin N."/>
            <person name="Zinovieva E."/>
            <person name="Stum M."/>
            <person name="Gigarel N."/>
            <person name="Dollfus H."/>
            <person name="Hamel C."/>
            <person name="Toutain A."/>
            <person name="Dufier J.L."/>
            <person name="Roche O."/>
            <person name="Munnich A."/>
            <person name="Bonnefont J.P."/>
            <person name="Kaplan J."/>
            <person name="Rozet J.M."/>
        </authorList>
    </citation>
    <scope>VARIANT RP3 GLU-267</scope>
</reference>
<dbReference type="EMBL" id="U57629">
    <property type="protein sequence ID" value="AAC50481.1"/>
    <property type="molecule type" value="mRNA"/>
</dbReference>
<dbReference type="EMBL" id="X97668">
    <property type="protein sequence ID" value="CAA66258.1"/>
    <property type="molecule type" value="mRNA"/>
</dbReference>
<dbReference type="EMBL" id="AJ238395">
    <property type="protein sequence ID" value="CAB54002.1"/>
    <property type="molecule type" value="mRNA"/>
</dbReference>
<dbReference type="EMBL" id="AJ318463">
    <property type="protein sequence ID" value="CAC86116.1"/>
    <property type="molecule type" value="Genomic_DNA"/>
</dbReference>
<dbReference type="EMBL" id="AL606748">
    <property type="status" value="NOT_ANNOTATED_CDS"/>
    <property type="molecule type" value="Genomic_DNA"/>
</dbReference>
<dbReference type="EMBL" id="CH471141">
    <property type="protein sequence ID" value="EAW59441.1"/>
    <property type="molecule type" value="Genomic_DNA"/>
</dbReference>
<dbReference type="EMBL" id="BC031624">
    <property type="protein sequence ID" value="AAH31624.1"/>
    <property type="molecule type" value="mRNA"/>
</dbReference>
<dbReference type="EMBL" id="AF286471">
    <property type="protein sequence ID" value="AAG00550.1"/>
    <property type="molecule type" value="Genomic_DNA"/>
</dbReference>
<dbReference type="EMBL" id="BK005711">
    <property type="protein sequence ID" value="DAA05713.1"/>
    <property type="molecule type" value="mRNA"/>
</dbReference>
<dbReference type="CCDS" id="CCDS14246.1">
    <molecule id="Q92834-2"/>
</dbReference>
<dbReference type="CCDS" id="CCDS35229.1">
    <molecule id="Q92834-6"/>
</dbReference>
<dbReference type="CCDS" id="CCDS94589.1">
    <molecule id="Q92834-4"/>
</dbReference>
<dbReference type="RefSeq" id="NP_000319.1">
    <molecule id="Q92834-2"/>
    <property type="nucleotide sequence ID" value="NM_000328.3"/>
</dbReference>
<dbReference type="RefSeq" id="NP_001030025.1">
    <molecule id="Q92834-6"/>
    <property type="nucleotide sequence ID" value="NM_001034853.2"/>
</dbReference>
<dbReference type="RefSeq" id="NP_001354175.1">
    <molecule id="Q92834-4"/>
    <property type="nucleotide sequence ID" value="NM_001367246.1"/>
</dbReference>
<dbReference type="RefSeq" id="XP_016885199.1">
    <property type="nucleotide sequence ID" value="XM_017029710.1"/>
</dbReference>
<dbReference type="RefSeq" id="XP_047298285.1">
    <molecule id="Q92834-1"/>
    <property type="nucleotide sequence ID" value="XM_047442329.1"/>
</dbReference>
<dbReference type="RefSeq" id="XP_054183494.1">
    <molecule id="Q92834-1"/>
    <property type="nucleotide sequence ID" value="XM_054327519.1"/>
</dbReference>
<dbReference type="PDB" id="4JHN">
    <property type="method" value="X-ray"/>
    <property type="resolution" value="1.70 A"/>
    <property type="chains" value="A/B/C/D=1-392"/>
</dbReference>
<dbReference type="PDB" id="4JHP">
    <property type="method" value="X-ray"/>
    <property type="resolution" value="1.90 A"/>
    <property type="chains" value="C=7-368"/>
</dbReference>
<dbReference type="PDB" id="4QAM">
    <property type="method" value="X-ray"/>
    <property type="resolution" value="1.83 A"/>
    <property type="chains" value="A=1-392"/>
</dbReference>
<dbReference type="PDBsum" id="4JHN"/>
<dbReference type="PDBsum" id="4JHP"/>
<dbReference type="PDBsum" id="4QAM"/>
<dbReference type="SMR" id="Q92834"/>
<dbReference type="BioGRID" id="112030">
    <property type="interactions" value="47"/>
</dbReference>
<dbReference type="CORUM" id="Q92834"/>
<dbReference type="FunCoup" id="Q92834">
    <property type="interactions" value="435"/>
</dbReference>
<dbReference type="IntAct" id="Q92834">
    <property type="interactions" value="45"/>
</dbReference>
<dbReference type="STRING" id="9606.ENSP00000495537"/>
<dbReference type="GlyGen" id="Q92834">
    <property type="glycosylation" value="1 site, 1 O-linked glycan (1 site)"/>
</dbReference>
<dbReference type="iPTMnet" id="Q92834"/>
<dbReference type="PhosphoSitePlus" id="Q92834"/>
<dbReference type="BioMuta" id="RPGR"/>
<dbReference type="DMDM" id="23503098"/>
<dbReference type="jPOST" id="Q92834"/>
<dbReference type="MassIVE" id="Q92834"/>
<dbReference type="PeptideAtlas" id="Q92834"/>
<dbReference type="ProteomicsDB" id="19799"/>
<dbReference type="ProteomicsDB" id="75513">
    <molecule id="Q92834-1"/>
</dbReference>
<dbReference type="ProteomicsDB" id="75514">
    <molecule id="Q92834-2"/>
</dbReference>
<dbReference type="ProteomicsDB" id="75515">
    <molecule id="Q92834-3"/>
</dbReference>
<dbReference type="ProteomicsDB" id="75516">
    <molecule id="Q92834-4"/>
</dbReference>
<dbReference type="ProteomicsDB" id="75517">
    <molecule id="Q92834-5"/>
</dbReference>
<dbReference type="Pumba" id="Q92834"/>
<dbReference type="Antibodypedia" id="472">
    <property type="antibodies" value="183 antibodies from 30 providers"/>
</dbReference>
<dbReference type="DNASU" id="6103"/>
<dbReference type="Ensembl" id="ENST00000339363.7">
    <molecule id="Q92834-1"/>
    <property type="protein sequence ID" value="ENSP00000343671.3"/>
    <property type="gene ID" value="ENSG00000156313.15"/>
</dbReference>
<dbReference type="Ensembl" id="ENST00000474584.5">
    <molecule id="Q92834-5"/>
    <property type="protein sequence ID" value="ENSP00000418926.1"/>
    <property type="gene ID" value="ENSG00000156313.15"/>
</dbReference>
<dbReference type="Ensembl" id="ENST00000482855.5">
    <molecule id="Q92834-3"/>
    <property type="protein sequence ID" value="ENSP00000419276.1"/>
    <property type="gene ID" value="ENSG00000156313.15"/>
</dbReference>
<dbReference type="Ensembl" id="ENST00000642395.2">
    <molecule id="Q92834-2"/>
    <property type="protein sequence ID" value="ENSP00000493468.2"/>
    <property type="gene ID" value="ENSG00000156313.15"/>
</dbReference>
<dbReference type="Ensembl" id="ENST00000644337.1">
    <molecule id="Q92834-4"/>
    <property type="protein sequence ID" value="ENSP00000494557.1"/>
    <property type="gene ID" value="ENSG00000156313.15"/>
</dbReference>
<dbReference type="Ensembl" id="ENST00000645032.1">
    <molecule id="Q92834-6"/>
    <property type="protein sequence ID" value="ENSP00000495537.1"/>
    <property type="gene ID" value="ENSG00000156313.15"/>
</dbReference>
<dbReference type="GeneID" id="6103"/>
<dbReference type="KEGG" id="hsa:6103"/>
<dbReference type="MANE-Select" id="ENST00000645032.1">
    <molecule id="Q92834-6"/>
    <property type="protein sequence ID" value="ENSP00000495537.1"/>
    <property type="RefSeq nucleotide sequence ID" value="NM_001034853.2"/>
    <property type="RefSeq protein sequence ID" value="NP_001030025.1"/>
</dbReference>
<dbReference type="UCSC" id="uc004deb.4">
    <molecule id="Q92834-1"/>
    <property type="organism name" value="human"/>
</dbReference>
<dbReference type="AGR" id="HGNC:10295"/>
<dbReference type="CTD" id="6103"/>
<dbReference type="DisGeNET" id="6103"/>
<dbReference type="GeneCards" id="RPGR"/>
<dbReference type="GeneReviews" id="RPGR"/>
<dbReference type="HGNC" id="HGNC:10295">
    <property type="gene designation" value="RPGR"/>
</dbReference>
<dbReference type="HPA" id="ENSG00000156313">
    <property type="expression patterns" value="Low tissue specificity"/>
</dbReference>
<dbReference type="MalaCards" id="RPGR"/>
<dbReference type="MIM" id="300029">
    <property type="type" value="phenotype"/>
</dbReference>
<dbReference type="MIM" id="300455">
    <property type="type" value="phenotype"/>
</dbReference>
<dbReference type="MIM" id="300834">
    <property type="type" value="phenotype"/>
</dbReference>
<dbReference type="MIM" id="304020">
    <property type="type" value="phenotype"/>
</dbReference>
<dbReference type="MIM" id="312610">
    <property type="type" value="gene"/>
</dbReference>
<dbReference type="neXtProt" id="NX_Q92834"/>
<dbReference type="OpenTargets" id="ENSG00000156313"/>
<dbReference type="Orphanet" id="49382">
    <property type="disease" value="Achromatopsia"/>
</dbReference>
<dbReference type="Orphanet" id="1872">
    <property type="disease" value="Cone rod dystrophy"/>
</dbReference>
<dbReference type="Orphanet" id="244">
    <property type="disease" value="Primary ciliary dyskinesia"/>
</dbReference>
<dbReference type="Orphanet" id="247522">
    <property type="disease" value="Primary ciliary dyskinesia-retinitis pigmentosa syndrome"/>
</dbReference>
<dbReference type="Orphanet" id="791">
    <property type="disease" value="Retinitis pigmentosa"/>
</dbReference>
<dbReference type="PharmGKB" id="PA34656"/>
<dbReference type="VEuPathDB" id="HostDB:ENSG00000156313"/>
<dbReference type="eggNOG" id="KOG1075">
    <property type="taxonomic scope" value="Eukaryota"/>
</dbReference>
<dbReference type="eggNOG" id="KOG1426">
    <property type="taxonomic scope" value="Eukaryota"/>
</dbReference>
<dbReference type="GeneTree" id="ENSGT00940000159616"/>
<dbReference type="HOGENOM" id="CLU_005210_5_2_1"/>
<dbReference type="InParanoid" id="Q92834"/>
<dbReference type="OMA" id="GKYQETG"/>
<dbReference type="OrthoDB" id="9538197at2759"/>
<dbReference type="PAN-GO" id="Q92834">
    <property type="GO annotations" value="6 GO annotations based on evolutionary models"/>
</dbReference>
<dbReference type="PhylomeDB" id="Q92834"/>
<dbReference type="TreeFam" id="TF331400"/>
<dbReference type="PathwayCommons" id="Q92834"/>
<dbReference type="SignaLink" id="Q92834"/>
<dbReference type="SIGNOR" id="Q92834"/>
<dbReference type="BioGRID-ORCS" id="6103">
    <property type="hits" value="12 hits in 778 CRISPR screens"/>
</dbReference>
<dbReference type="CD-CODE" id="8C2F96ED">
    <property type="entry name" value="Centrosome"/>
</dbReference>
<dbReference type="ChiTaRS" id="RPGR">
    <property type="organism name" value="human"/>
</dbReference>
<dbReference type="EvolutionaryTrace" id="Q92834"/>
<dbReference type="GeneWiki" id="Retinitis_pigmentosa_GTPase_regulator"/>
<dbReference type="GenomeRNAi" id="6103"/>
<dbReference type="Pharos" id="Q92834">
    <property type="development level" value="Tbio"/>
</dbReference>
<dbReference type="PRO" id="PR:Q92834"/>
<dbReference type="Proteomes" id="UP000005640">
    <property type="component" value="Chromosome X"/>
</dbReference>
<dbReference type="RNAct" id="Q92834">
    <property type="molecule type" value="protein"/>
</dbReference>
<dbReference type="Bgee" id="ENSG00000156313">
    <property type="expression patterns" value="Expressed in sperm and 196 other cell types or tissues"/>
</dbReference>
<dbReference type="ExpressionAtlas" id="Q92834">
    <property type="expression patterns" value="baseline and differential"/>
</dbReference>
<dbReference type="GO" id="GO:0005813">
    <property type="term" value="C:centrosome"/>
    <property type="evidence" value="ECO:0000314"/>
    <property type="project" value="UniProtKB"/>
</dbReference>
<dbReference type="GO" id="GO:0036064">
    <property type="term" value="C:ciliary basal body"/>
    <property type="evidence" value="ECO:0000250"/>
    <property type="project" value="UniProtKB"/>
</dbReference>
<dbReference type="GO" id="GO:0005737">
    <property type="term" value="C:cytoplasm"/>
    <property type="evidence" value="ECO:0000318"/>
    <property type="project" value="GO_Central"/>
</dbReference>
<dbReference type="GO" id="GO:0005794">
    <property type="term" value="C:Golgi apparatus"/>
    <property type="evidence" value="ECO:0000250"/>
    <property type="project" value="UniProtKB"/>
</dbReference>
<dbReference type="GO" id="GO:0032391">
    <property type="term" value="C:photoreceptor connecting cilium"/>
    <property type="evidence" value="ECO:0000250"/>
    <property type="project" value="UniProtKB"/>
</dbReference>
<dbReference type="GO" id="GO:0001750">
    <property type="term" value="C:photoreceptor outer segment"/>
    <property type="evidence" value="ECO:0000314"/>
    <property type="project" value="UniProtKB"/>
</dbReference>
<dbReference type="GO" id="GO:0036126">
    <property type="term" value="C:sperm flagellum"/>
    <property type="evidence" value="ECO:0000250"/>
    <property type="project" value="UniProtKB"/>
</dbReference>
<dbReference type="GO" id="GO:0005085">
    <property type="term" value="F:guanyl-nucleotide exchange factor activity"/>
    <property type="evidence" value="ECO:0000315"/>
    <property type="project" value="UniProtKB"/>
</dbReference>
<dbReference type="GO" id="GO:0003723">
    <property type="term" value="F:RNA binding"/>
    <property type="evidence" value="ECO:0007005"/>
    <property type="project" value="UniProtKB"/>
</dbReference>
<dbReference type="GO" id="GO:0061630">
    <property type="term" value="F:ubiquitin protein ligase activity"/>
    <property type="evidence" value="ECO:0000318"/>
    <property type="project" value="GO_Central"/>
</dbReference>
<dbReference type="GO" id="GO:0060271">
    <property type="term" value="P:cilium assembly"/>
    <property type="evidence" value="ECO:0000315"/>
    <property type="project" value="UniProtKB"/>
</dbReference>
<dbReference type="GO" id="GO:0042462">
    <property type="term" value="P:eye photoreceptor cell development"/>
    <property type="evidence" value="ECO:0000250"/>
    <property type="project" value="UniProtKB"/>
</dbReference>
<dbReference type="GO" id="GO:0006886">
    <property type="term" value="P:intracellular protein transport"/>
    <property type="evidence" value="ECO:0000304"/>
    <property type="project" value="ProtInc"/>
</dbReference>
<dbReference type="GO" id="GO:0042073">
    <property type="term" value="P:intraciliary transport"/>
    <property type="evidence" value="ECO:0000250"/>
    <property type="project" value="UniProtKB"/>
</dbReference>
<dbReference type="GO" id="GO:0010508">
    <property type="term" value="P:positive regulation of autophagy"/>
    <property type="evidence" value="ECO:0000250"/>
    <property type="project" value="UniProtKB"/>
</dbReference>
<dbReference type="GO" id="GO:0097499">
    <property type="term" value="P:protein localization to non-motile cilium"/>
    <property type="evidence" value="ECO:0000315"/>
    <property type="project" value="UniProtKB"/>
</dbReference>
<dbReference type="GO" id="GO:0016567">
    <property type="term" value="P:protein ubiquitination"/>
    <property type="evidence" value="ECO:0000318"/>
    <property type="project" value="GO_Central"/>
</dbReference>
<dbReference type="GO" id="GO:0006511">
    <property type="term" value="P:ubiquitin-dependent protein catabolic process"/>
    <property type="evidence" value="ECO:0000318"/>
    <property type="project" value="GO_Central"/>
</dbReference>
<dbReference type="GO" id="GO:0007601">
    <property type="term" value="P:visual perception"/>
    <property type="evidence" value="ECO:0000315"/>
    <property type="project" value="UniProtKB"/>
</dbReference>
<dbReference type="FunFam" id="2.130.10.30:FF:000013">
    <property type="entry name" value="Retinitis pigmentosa GTPase regulator isoform 1"/>
    <property type="match status" value="1"/>
</dbReference>
<dbReference type="Gene3D" id="2.130.10.30">
    <property type="entry name" value="Regulator of chromosome condensation 1/beta-lactamase-inhibitor protein II"/>
    <property type="match status" value="1"/>
</dbReference>
<dbReference type="InterPro" id="IPR009091">
    <property type="entry name" value="RCC1/BLIP-II"/>
</dbReference>
<dbReference type="InterPro" id="IPR000408">
    <property type="entry name" value="Reg_chr_condens"/>
</dbReference>
<dbReference type="InterPro" id="IPR051625">
    <property type="entry name" value="Signaling_Regulatory_Domain"/>
</dbReference>
<dbReference type="PANTHER" id="PTHR22872">
    <property type="entry name" value="BTK-BINDING PROTEIN-RELATED"/>
    <property type="match status" value="1"/>
</dbReference>
<dbReference type="PANTHER" id="PTHR22872:SF9">
    <property type="entry name" value="X-LINKED RETINITIS PIGMENTOSA GTPASE REGULATOR"/>
    <property type="match status" value="1"/>
</dbReference>
<dbReference type="Pfam" id="PF25390">
    <property type="entry name" value="WD40_RLD"/>
    <property type="match status" value="1"/>
</dbReference>
<dbReference type="PRINTS" id="PR00633">
    <property type="entry name" value="RCCNDNSATION"/>
</dbReference>
<dbReference type="SUPFAM" id="SSF50985">
    <property type="entry name" value="RCC1/BLIP-II"/>
    <property type="match status" value="1"/>
</dbReference>
<dbReference type="PROSITE" id="PS00626">
    <property type="entry name" value="RCC1_2"/>
    <property type="match status" value="4"/>
</dbReference>
<dbReference type="PROSITE" id="PS50012">
    <property type="entry name" value="RCC1_3"/>
    <property type="match status" value="6"/>
</dbReference>
<comment type="function">
    <text evidence="2 26 27">Acts as a guanine-nucleotide releasing factor (GEF) for RAB8A and RAB37 by promoting the conversion of inactive RAB-GDP to the active form RAB-GTP (PubMed:20631154). GEF activity towards RAB8A may facilitate ciliary trafficking by modulating ciliary intracellular localization of RAB8A (PubMed:20631154). GEF activity towards RAB37 maintains autophagic homeostasis and retinal function (By similarity). Involved in photoreceptor integrity (By similarity). May control cilia formation by regulating actin stress filaments and cell contractility. May be involved in microtubule organization and regulation of transport in primary cilia (PubMed:21933838). May play a critical role in spermatogenesis and in intraflagellar transport processes (By similarity).</text>
</comment>
<comment type="subunit">
    <text evidence="2 10 25 26 28 29 34">Interacts with SPATA7 (By similarity). Interacts with CEP290 (By similarity). Interacts with WHRN (By similarity). Interacts with PDE6D (PubMed:23559067, PubMed:24981858, PubMed:9990021). Interacts with RPGRIP1 (PubMed:10958648, PubMed:24981858). Interacts with RPGRIP1L (PubMed:19430481, PubMed:24981858). PDE6D, RPGRIP1 and RPGRIP1L may compete for the same binding sites (PubMed:24981858). Interacts with RAB37 and RAB8A (in GDP-bound forms); functions as GEF for RAB37 and RAB8A (PubMed:20631154).</text>
</comment>
<comment type="subunit">
    <molecule>Isoform 6</molecule>
    <text evidence="22 23">Isoform 6 interacts with NPM1 (via C-terminus) (PubMed:15772089). Isoform 6 interacts with SMC1A and SMC3 (PubMed:16043481).</text>
</comment>
<comment type="interaction">
    <interactant intactId="EBI-6558417">
        <id>Q92834</id>
    </interactant>
    <interactant intactId="EBI-10172004">
        <id>Q8IX15-3</id>
        <label>HOMEZ</label>
    </interactant>
    <organismsDiffer>false</organismsDiffer>
    <experiments>3</experiments>
</comment>
<comment type="interaction">
    <interactant intactId="EBI-6558417">
        <id>Q92834</id>
    </interactant>
    <interactant intactId="EBI-953828">
        <id>O15259</id>
        <label>NPHP1</label>
    </interactant>
    <organismsDiffer>false</organismsDiffer>
    <experiments>3</experiments>
</comment>
<comment type="interaction">
    <interactant intactId="EBI-6558417">
        <id>Q92834</id>
    </interactant>
    <interactant intactId="EBI-4281852">
        <id>O75161</id>
        <label>NPHP4</label>
    </interactant>
    <organismsDiffer>false</organismsDiffer>
    <experiments>4</experiments>
</comment>
<comment type="interaction">
    <interactant intactId="EBI-6558417">
        <id>Q92834</id>
    </interactant>
    <interactant intactId="EBI-712685">
        <id>O43924</id>
        <label>PDE6D</label>
    </interactant>
    <organismsDiffer>false</organismsDiffer>
    <experiments>12</experiments>
</comment>
<comment type="interaction">
    <interactant intactId="EBI-6558417">
        <id>Q92834</id>
    </interactant>
    <interactant intactId="EBI-1050213">
        <id>Q96KN7</id>
        <label>RPGRIP1</label>
    </interactant>
    <organismsDiffer>false</organismsDiffer>
    <experiments>10</experiments>
</comment>
<comment type="interaction">
    <interactant intactId="EBI-6558417">
        <id>Q92834</id>
    </interactant>
    <interactant intactId="EBI-11525164">
        <id>Q96KN7-4</id>
        <label>RPGRIP1</label>
    </interactant>
    <organismsDiffer>false</organismsDiffer>
    <experiments>3</experiments>
</comment>
<comment type="interaction">
    <interactant intactId="EBI-6558417">
        <id>Q92834</id>
    </interactant>
    <interactant intactId="EBI-6558402">
        <id>O55057</id>
        <label>Pde6d</label>
    </interactant>
    <organismsDiffer>true</organismsDiffer>
    <experiments>3</experiments>
</comment>
<comment type="interaction">
    <interactant intactId="EBI-6558503">
        <id>Q92834-2</id>
    </interactant>
    <interactant intactId="EBI-712685">
        <id>O43924</id>
        <label>PDE6D</label>
    </interactant>
    <organismsDiffer>false</organismsDiffer>
    <experiments>3</experiments>
</comment>
<comment type="interaction">
    <interactant intactId="EBI-6558503">
        <id>Q92834-2</id>
    </interactant>
    <interactant intactId="EBI-6558402">
        <id>O55057</id>
        <label>Pde6d</label>
    </interactant>
    <organismsDiffer>true</organismsDiffer>
    <experiments>3</experiments>
</comment>
<comment type="interaction">
    <interactant intactId="EBI-16431517">
        <id>Q92834-6</id>
    </interactant>
    <interactant intactId="EBI-25840379">
        <id>Q14203-5</id>
        <label>DCTN1</label>
    </interactant>
    <organismsDiffer>false</organismsDiffer>
    <experiments>3</experiments>
</comment>
<comment type="interaction">
    <interactant intactId="EBI-16431517">
        <id>Q92834-6</id>
    </interactant>
    <interactant intactId="EBI-10172004">
        <id>Q8IX15-3</id>
        <label>HOMEZ</label>
    </interactant>
    <organismsDiffer>false</organismsDiffer>
    <experiments>3</experiments>
</comment>
<comment type="subcellular location">
    <subcellularLocation>
        <location evidence="2">Cytoplasm</location>
        <location evidence="2">Cytoskeleton</location>
        <location evidence="2">Flagellum axoneme</location>
    </subcellularLocation>
    <subcellularLocation>
        <location evidence="22">Golgi apparatus</location>
    </subcellularLocation>
    <subcellularLocation>
        <location evidence="2">Cell projection</location>
        <location evidence="2">Cilium</location>
    </subcellularLocation>
    <text evidence="1 2">In the retinal photoreceptor cell layer, localizes at the connecting cilium (By similarity). Colocalizes with WHRN in the photoreceptor connecting cilium (By similarity). Colocalizes with CEP290 in the photoreceptor connecting cilium (By similarity). Colocalizes with RPGRIP1 in the photoreceptor connecting cilium (By similarity). Colocalizes with RPGR at the primary cilia of epithelial cells (By similarity).</text>
</comment>
<comment type="subcellular location">
    <molecule>Isoform 6</molecule>
    <subcellularLocation>
        <location>Cytoplasm</location>
        <location>Cytoskeleton</location>
        <location>Microtubule organizing center</location>
        <location>Centrosome</location>
    </subcellularLocation>
    <subcellularLocation>
        <location>Cytoplasm</location>
        <location>Cytoskeleton</location>
        <location>Cilium basal body</location>
    </subcellularLocation>
    <subcellularLocation>
        <location>Cytoplasm</location>
        <location>Cytoskeleton</location>
        <location>Cilium axoneme</location>
    </subcellularLocation>
</comment>
<comment type="alternative products">
    <event type="alternative splicing"/>
    <isoform>
        <id>Q92834-1</id>
        <name>1</name>
        <sequence type="displayed"/>
    </isoform>
    <isoform>
        <id>Q92834-2</id>
        <name>2</name>
        <sequence type="described" ref="VSP_005548"/>
    </isoform>
    <isoform>
        <id>Q92834-3</id>
        <name>3</name>
        <sequence type="described" ref="VSP_005548 VSP_005549 VSP_005550"/>
    </isoform>
    <isoform>
        <id>Q92834-4</id>
        <name>4</name>
        <sequence type="described" ref="VSP_005547 VSP_005548"/>
    </isoform>
    <isoform>
        <id>Q92834-5</id>
        <name>5</name>
        <sequence type="described" ref="VSP_009183 VSP_009184"/>
    </isoform>
    <isoform>
        <id>Q92834-6</id>
        <name>6</name>
        <name>ORF15</name>
        <sequence type="described" ref="VSP_044559"/>
    </isoform>
    <text>Additional isoforms seem to exist.</text>
</comment>
<comment type="tissue specificity">
    <text evidence="16">Heart, brain, placenta, lung, liver, muscle, kidney, retina, pancreas and fetal retinal pigment epithelium. Isoform 3 is found only in the retina. Colocalizes with RPGRIP1 in the outer segment of rod photoreceptors and cone outer segments.</text>
</comment>
<comment type="domain">
    <text evidence="29">The RCC1 repeat region mediates interactions with RPGRIP1.</text>
</comment>
<comment type="PTM">
    <text evidence="2">Prenylated.</text>
</comment>
<comment type="disease" evidence="6 7 8 9 11 13 15 18 20 24 26 29 30 31 32 33">
    <disease id="DI-00973">
        <name>Retinitis pigmentosa 3</name>
        <acronym>RP3</acronym>
        <description>An X-linked retinal dystrophy belonging to the group of pigmentary retinopathies. Retinitis pigmentosa is characterized by retinal pigment deposits visible on fundus examination and primary loss of rod photoreceptor cells followed by secondary loss of cone photoreceptors. Patients typically have night vision blindness and loss of midperipheral visual field. As their condition progresses, they lose their far peripheral visual field and eventually central vision as well. In RP3, affected males have a severe phenotype, and carrier females show a wide spectrum of clinical features ranging from completely asymptomatic to severe retinitis pigmentosa. Heterozygous women can manifest a form of choroidoretinal degeneration which is distinguished from other types by the absence of visual defects in the presence of a brilliant, scintillating, golden-hued, patchy appearance most striking around the macula, called a tapetal-like retinal reflex.</description>
        <dbReference type="MIM" id="300029"/>
    </disease>
    <text>The disease is caused by variants affecting the gene represented in this entry.</text>
</comment>
<comment type="disease" evidence="19 21">
    <disease id="DI-00997">
        <name>Retinitis pigmentosa, X-linked, and sinorespiratory infections with or without deafness</name>
        <acronym>RPSRDF</acronym>
        <description>A disease characterized by the association of retinitis pigmentosa with recurrent upper and lower airway infections. Some patients also develop progressive hearing loss.</description>
        <dbReference type="MIM" id="300455"/>
    </disease>
    <text>The disease is caused by variants affecting the gene represented in this entry.</text>
</comment>
<comment type="disease" evidence="14">
    <disease id="DI-00327">
        <name>Cone-rod dystrophy, X-linked 1</name>
        <acronym>CORDX1</acronym>
        <description>An inherited retinal dystrophy characterized by retinal pigment deposits visible on fundus examination, predominantly in the macular region, and initial loss of cone photoreceptors followed by rod degeneration. This leads to decreased visual acuity and sensitivity in the central visual field, followed by loss of peripheral vision. Severe loss of vision occurs earlier than in retinitis pigmentosa. In cone-rod dystrophy X-linked type 1 the degree of rod-photoreceptor involvement can be variable, with degeneration increasing as the disease progresses. Affected individuals (essentially all of whom are males) present with decreased visual acuity, myopia, photophobia, abnormal color vision, full peripheral visual fields, decreased photopic electroretinographic responses, and granularity of the macular retinal pigment epithelium. Although penetrance appears to be nearly 100%, there is variable expressivity with respect to age at onset and severity of symptoms.</description>
        <dbReference type="MIM" id="304020"/>
    </disease>
    <text>The disease is caused by variants affecting the gene represented in this entry.</text>
</comment>
<comment type="disease" evidence="17">
    <disease id="DI-03005">
        <name>Macular degeneration, atrophic, X-linked</name>
        <acronym>MDXLA</acronym>
        <description>An ocular disorder characterized by macular atrophy causing progressive loss of visual acuity with minimal peripheral visual impairment. Some patients manifest extensive macular degeneration plus peripheral loss of retinal pigment epithelium and choriocapillaries. Full-field electroretinograms (ERGs) show normal cone and rod responses in some affected males despite advanced macular degeneration.</description>
        <dbReference type="MIM" id="300834"/>
    </disease>
    <text>The disease is caused by variants affecting the gene represented in this entry.</text>
</comment>
<name>RPGR_HUMAN</name>
<accession>Q92834</accession>
<accession>B1ARN3</accession>
<accession>E9PE28</accession>
<accession>O00702</accession>
<accession>O00737</accession>
<accession>Q3KN84</accession>
<accession>Q8N5T6</accession>
<accession>Q93039</accession>
<accession>Q9HD29</accession>
<accession>Q9UMR1</accession>
<sequence>MREPEELMPDSGAVFTFGKSKFAENNPGKFWFKNDVPVHLSCGDEHSAVVTGNNKLYMFGSNNWGQLGLGSKSAISKPTCVKALKPEKVKLAACGRNHTLVSTEGGNVYATGGNNEGQLGLGDTEERNTFHVISFFTSEHKIKQLSAGSNTSAALTEDGRLFMWGDNSEGQIGLKNVSNVCVPQQVTIGKPVSWISCGYYHSAFVTTDGELYVFGEPENGKLGLPNQLLGNHRTPQLVSEIPEKVIQVACGGEHTVVLTENAVYTFGLGQFGQLGLGTFLFETSEPKVIENIRDQTISYISCGENHTALITDIGLMYTFGDGRHGKLGLGLENFTNHFIPTLCSNFLRFIVKLVACGGCHMVVFAAPHRGVAKEIEFDEINDTCLSVATFLPYSSLTSGNVLQRTLSARMRRRERERSPDSFSMRRTLPPIEGTLGLSACFLPNSVFPRCSERNLQESVLSEQDLMQPEEPDYLLDEMTKEAEIDNSSTVESLGETTDILNMTHIMSLNSNEKSLKLSPVQKQKKQQTIGELTQDTALTENDDSDEYEEMSEMKEGKACKQHVSQGIFMTQPATTIEAFSDEEVGNDTGQVGPQADTDGEGLQKEVYRHENNNGVDQLDAKEIEKESDGGHSQKESEAEEIDSEKETKLAEIAGMKDLREREKSTKKMSPFFGNLPDRGMNTESEENKDFVKKRESCKQDVIFDSERESVEKPDSYMEGASESQQGIADGFQQPEAIEFSSGEKEDDEVETDQNIRYGRKLIEQGNEKETKPIISKSMAKYDFKCDRLSEIPEEKEGAEDSKGNGIEEQEVEANEENVKVHGGRKEKTEILSDDLTDKAEDHEFSKTEELKLEDVDEEINAENVESKKKTVGDDESVPTGYHSKTEGAERTNDDSSAETIEKKEKANLEERAICEYNENPKGYMLDDADSSSLEILENSETTPSKDMKKTKKIFLFKRVPSINQKIVKNNNEPLPEIKSIGDQIILKSDNKDADQNHMSQNHQNIPPTNTERRSKSCTIL</sequence>
<protein>
    <recommendedName>
        <fullName>X-linked retinitis pigmentosa GTPase regulator</fullName>
    </recommendedName>
</protein>
<organism>
    <name type="scientific">Homo sapiens</name>
    <name type="common">Human</name>
    <dbReference type="NCBI Taxonomy" id="9606"/>
    <lineage>
        <taxon>Eukaryota</taxon>
        <taxon>Metazoa</taxon>
        <taxon>Chordata</taxon>
        <taxon>Craniata</taxon>
        <taxon>Vertebrata</taxon>
        <taxon>Euteleostomi</taxon>
        <taxon>Mammalia</taxon>
        <taxon>Eutheria</taxon>
        <taxon>Euarchontoglires</taxon>
        <taxon>Primates</taxon>
        <taxon>Haplorrhini</taxon>
        <taxon>Catarrhini</taxon>
        <taxon>Hominidae</taxon>
        <taxon>Homo</taxon>
    </lineage>
</organism>
<evidence type="ECO:0000250" key="1">
    <source>
        <dbReference type="UniProtKB" id="Q9N1T2"/>
    </source>
</evidence>
<evidence type="ECO:0000250" key="2">
    <source>
        <dbReference type="UniProtKB" id="Q9R0X5"/>
    </source>
</evidence>
<evidence type="ECO:0000255" key="3"/>
<evidence type="ECO:0000256" key="4">
    <source>
        <dbReference type="SAM" id="MobiDB-lite"/>
    </source>
</evidence>
<evidence type="ECO:0000269" key="5">
    <source>
    </source>
</evidence>
<evidence type="ECO:0000269" key="6">
    <source>
    </source>
</evidence>
<evidence type="ECO:0000269" key="7">
    <source>
    </source>
</evidence>
<evidence type="ECO:0000269" key="8">
    <source>
    </source>
</evidence>
<evidence type="ECO:0000269" key="9">
    <source>
    </source>
</evidence>
<evidence type="ECO:0000269" key="10">
    <source>
    </source>
</evidence>
<evidence type="ECO:0000269" key="11">
    <source>
    </source>
</evidence>
<evidence type="ECO:0000269" key="12">
    <source>
    </source>
</evidence>
<evidence type="ECO:0000269" key="13">
    <source>
    </source>
</evidence>
<evidence type="ECO:0000269" key="14">
    <source>
    </source>
</evidence>
<evidence type="ECO:0000269" key="15">
    <source>
    </source>
</evidence>
<evidence type="ECO:0000269" key="16">
    <source>
    </source>
</evidence>
<evidence type="ECO:0000269" key="17">
    <source>
    </source>
</evidence>
<evidence type="ECO:0000269" key="18">
    <source>
    </source>
</evidence>
<evidence type="ECO:0000269" key="19">
    <source>
    </source>
</evidence>
<evidence type="ECO:0000269" key="20">
    <source>
    </source>
</evidence>
<evidence type="ECO:0000269" key="21">
    <source>
    </source>
</evidence>
<evidence type="ECO:0000269" key="22">
    <source>
    </source>
</evidence>
<evidence type="ECO:0000269" key="23">
    <source>
    </source>
</evidence>
<evidence type="ECO:0000269" key="24">
    <source>
    </source>
</evidence>
<evidence type="ECO:0000269" key="25">
    <source>
    </source>
</evidence>
<evidence type="ECO:0000269" key="26">
    <source>
    </source>
</evidence>
<evidence type="ECO:0000269" key="27">
    <source>
    </source>
</evidence>
<evidence type="ECO:0000269" key="28">
    <source>
    </source>
</evidence>
<evidence type="ECO:0000269" key="29">
    <source>
    </source>
</evidence>
<evidence type="ECO:0000269" key="30">
    <source>
    </source>
</evidence>
<evidence type="ECO:0000269" key="31">
    <source>
    </source>
</evidence>
<evidence type="ECO:0000269" key="32">
    <source>
    </source>
</evidence>
<evidence type="ECO:0000269" key="33">
    <source>
    </source>
</evidence>
<evidence type="ECO:0000269" key="34">
    <source>
    </source>
</evidence>
<evidence type="ECO:0000303" key="35">
    <source>
    </source>
</evidence>
<evidence type="ECO:0000303" key="36">
    <source>
    </source>
</evidence>
<evidence type="ECO:0000303" key="37">
    <source>
    </source>
</evidence>
<evidence type="ECO:0000303" key="38">
    <source>
    </source>
</evidence>
<evidence type="ECO:0000305" key="39"/>
<evidence type="ECO:0000312" key="40">
    <source>
        <dbReference type="HGNC" id="HGNC:10295"/>
    </source>
</evidence>
<evidence type="ECO:0007744" key="41">
    <source>
    </source>
</evidence>
<evidence type="ECO:0007829" key="42">
    <source>
        <dbReference type="PDB" id="4JHN"/>
    </source>
</evidence>
<evidence type="ECO:0007829" key="43">
    <source>
        <dbReference type="PDB" id="4JHP"/>
    </source>
</evidence>
<evidence type="ECO:0007829" key="44">
    <source>
        <dbReference type="PDB" id="4QAM"/>
    </source>
</evidence>
<feature type="chain" id="PRO_0000206638" description="X-linked retinitis pigmentosa GTPase regulator">
    <location>
        <begin position="1"/>
        <end position="1017"/>
    </location>
</feature>
<feature type="propeptide" id="PRO_0000370844" description="Removed in mature form" evidence="3">
    <location>
        <begin position="1018"/>
        <end position="1020"/>
    </location>
</feature>
<feature type="repeat" description="RCC1 1">
    <location>
        <begin position="54"/>
        <end position="105"/>
    </location>
</feature>
<feature type="repeat" description="RCC1 2">
    <location>
        <begin position="106"/>
        <end position="158"/>
    </location>
</feature>
<feature type="repeat" description="RCC1 3">
    <location>
        <begin position="159"/>
        <end position="208"/>
    </location>
</feature>
<feature type="repeat" description="RCC1 4">
    <location>
        <begin position="209"/>
        <end position="261"/>
    </location>
</feature>
<feature type="repeat" description="RCC1 5">
    <location>
        <begin position="262"/>
        <end position="313"/>
    </location>
</feature>
<feature type="repeat" description="RCC1 6">
    <location>
        <begin position="314"/>
        <end position="367"/>
    </location>
</feature>
<feature type="region of interest" description="Disordered" evidence="4">
    <location>
        <begin position="609"/>
        <end position="776"/>
    </location>
</feature>
<feature type="region of interest" description="Disordered" evidence="4">
    <location>
        <begin position="790"/>
        <end position="906"/>
    </location>
</feature>
<feature type="region of interest" description="Disordered" evidence="4">
    <location>
        <begin position="989"/>
        <end position="1020"/>
    </location>
</feature>
<feature type="compositionally biased region" description="Basic and acidic residues" evidence="4">
    <location>
        <begin position="618"/>
        <end position="636"/>
    </location>
</feature>
<feature type="compositionally biased region" description="Basic and acidic residues" evidence="4">
    <location>
        <begin position="644"/>
        <end position="665"/>
    </location>
</feature>
<feature type="compositionally biased region" description="Basic and acidic residues" evidence="4">
    <location>
        <begin position="685"/>
        <end position="698"/>
    </location>
</feature>
<feature type="compositionally biased region" description="Basic and acidic residues" evidence="4">
    <location>
        <begin position="704"/>
        <end position="715"/>
    </location>
</feature>
<feature type="compositionally biased region" description="Basic and acidic residues" evidence="4">
    <location>
        <begin position="760"/>
        <end position="771"/>
    </location>
</feature>
<feature type="compositionally biased region" description="Basic and acidic residues" evidence="4">
    <location>
        <begin position="790"/>
        <end position="802"/>
    </location>
</feature>
<feature type="compositionally biased region" description="Basic and acidic residues" evidence="4">
    <location>
        <begin position="816"/>
        <end position="853"/>
    </location>
</feature>
<feature type="compositionally biased region" description="Basic and acidic residues" evidence="4">
    <location>
        <begin position="883"/>
        <end position="906"/>
    </location>
</feature>
<feature type="compositionally biased region" description="Polar residues" evidence="4">
    <location>
        <begin position="996"/>
        <end position="1009"/>
    </location>
</feature>
<feature type="modified residue" description="Phosphoserine" evidence="41">
    <location>
        <position position="418"/>
    </location>
</feature>
<feature type="modified residue" description="Phosphoserine" evidence="41">
    <location>
        <position position="518"/>
    </location>
</feature>
<feature type="modified residue" description="Cysteine methyl ester" evidence="3">
    <location>
        <position position="1017"/>
    </location>
</feature>
<feature type="lipid moiety-binding region" description="S-geranylgeranyl cysteine" evidence="3">
    <location>
        <position position="1017"/>
    </location>
</feature>
<feature type="splice variant" id="VSP_005547" description="In isoform 4." evidence="37">
    <location>
        <begin position="354"/>
        <end position="415"/>
    </location>
</feature>
<feature type="splice variant" id="VSP_009183" description="In isoform 5." evidence="36">
    <original>YLLDEMTK</original>
    <variation>THHEPEFQ</variation>
    <location>
        <begin position="473"/>
        <end position="480"/>
    </location>
</feature>
<feature type="splice variant" id="VSP_009184" description="In isoform 5." evidence="36">
    <location>
        <begin position="481"/>
        <end position="1020"/>
    </location>
</feature>
<feature type="splice variant" id="VSP_044559" description="In isoform 6." evidence="39">
    <original>GNDTGQVGPQADTDGEGLQKEVYRHENNNGVDQLDAKEIEKESDGGHSQKESEAEEIDSEKETKLAEIAGMKDLREREKSTKKMSPFFGNLPDRGMNTESEENKDFVKKRESCKQDVIFDSERESVEKPDSYMEGASESQQGIADGFQQPEAIEFSSGEKEDDEVETDQNIRYGRKLIEQGNEKETKPIISKSMAKYDFKCDRLSEIPEEKEGAEDSKGNGIEEQEVEANEENVKVHGGRKEKTEILSDDLTDKAEDHEFSKTEELKLEDVDEEINAENVESKKKTVGDDESVPTGYHSKTEGAERTNDDSSAETIEKKEKANLEERAICEYNENPKGYMLDDADSSSLEILENSETTPSKDMKKTKKIFLFKRVPSINQKIVKNNNEPLPEIKSIGDQIILKSDNKDADQNHMSQNHQNIPPTNTERRSKSCTIL</original>
    <variation>EIPEEKEGAEDSKGNGIEEQEVEANEENVKVHGGRKEKTEILSDDLTDKAEVSEGKAKSVGEAEDGPEGRGDGTCEEGSSGAEHWQDEEREKGEKDKGRGEMERPGEGEKELAEKEEWKKRDGEEQEQKEREQGHQKERNQEMEEGGEEEHGEGEEEEGDREEEEEKEGEGKEEGEGEEVEGEREKEEGERKKEERAGKEEKGEEEGDQGEGEEEETEGRGEEKEEGGEVEGGEVEEGKGEREEEEEEGEGEEEEGEGEEEEGEGEEEEGEGKGEEEGEEGEGEEEGEEGEGEGEEEEGEGEGEEEGEGEGEEEEGEGEGEEEGEGEGEEEEGEGKGEEEGEEGEGEGEEEEGEGEGEDGEGEGEEEEGEWEGEEEEGEGEGEEEGEGEGEEGEGEGEEEEGEGEGEEEEGEEEGEEEGEGEEEGEGEGEEEEEGEVEGEVEGEEGEGEGEEEEGEEEGEEREKEGEGEENRRNREEEEEEEGKYQETGEEENERQDGEEYKKVSKIKGSVKYGKHKTYQKKSVTNTQGNGKEQRSKMPVQSKRLLKNGPSGSKKFWNNVLPHYLELK</variation>
    <location>
        <begin position="585"/>
        <end position="1020"/>
    </location>
</feature>
<feature type="splice variant" id="VSP_005548" description="In isoform 2, isoform 3 and isoform 4." evidence="35 37 38">
    <location>
        <begin position="585"/>
        <end position="789"/>
    </location>
</feature>
<feature type="splice variant" id="VSP_005549" description="In isoform 3." evidence="35">
    <original>DHEFSKTEELK</original>
    <variation>YSASHSQIVSV</variation>
    <location>
        <begin position="841"/>
        <end position="851"/>
    </location>
</feature>
<feature type="splice variant" id="VSP_005550" description="In isoform 3." evidence="35">
    <location>
        <begin position="852"/>
        <end position="1020"/>
    </location>
</feature>
<feature type="sequence variant" id="VAR_018057" description="In RP3; dbSNP:rs62638630." evidence="9">
    <original>G</original>
    <variation>E</variation>
    <location>
        <position position="43"/>
    </location>
</feature>
<feature type="sequence variant" id="VAR_018058" description="In RP3; dbSNP:rs62638629." evidence="9">
    <original>G</original>
    <variation>R</variation>
    <location>
        <position position="43"/>
    </location>
</feature>
<feature type="sequence variant" id="VAR_008501" description="In RP3; no change in GEF activity towards RAB8A; dbSNP:rs62638634." evidence="9 26 32 33">
    <original>G</original>
    <variation>V</variation>
    <location>
        <position position="60"/>
    </location>
</feature>
<feature type="sequence variant" id="VAR_008503" description="In RP3; benign; dbSNP:rs111631988." evidence="32">
    <original>I</original>
    <variation>V</variation>
    <location>
        <position position="75"/>
    </location>
</feature>
<feature type="sequence variant" id="VAR_013624" description="In dbSNP:rs1801685." evidence="5">
    <original>S</original>
    <variation>I</variation>
    <location>
        <position position="76"/>
    </location>
</feature>
<feature type="sequence variant" id="VAR_008504" description="In RP3; reduces interaction with PDE6D; decreased GEF activity towards RAB8A; dbSNP:rs62638636." evidence="8 26 30 34">
    <original>H</original>
    <variation>Q</variation>
    <location>
        <position position="98"/>
    </location>
</feature>
<feature type="sequence variant" id="VAR_013625" description="In RP3; no change in GEF activity towards RAB8A; dbSNP:rs62638637." evidence="6 26">
    <original>T</original>
    <variation>N</variation>
    <location>
        <position position="99"/>
    </location>
</feature>
<feature type="sequence variant" id="VAR_018059" description="In RP3; dbSNP:rs62638643." evidence="9 15">
    <original>R</original>
    <variation>G</variation>
    <location>
        <position position="127"/>
    </location>
</feature>
<feature type="sequence variant" id="VAR_006850" description="In RP3; reduces interaction with PDE6D; decreased GEF activity towards RAB8A; dbSNP:rs62638644." evidence="26 31 34">
    <original>F</original>
    <variation>C</variation>
    <location>
        <position position="130"/>
    </location>
</feature>
<feature type="sequence variant" id="VAR_025949" description="In RP3." evidence="18">
    <original>S</original>
    <variation>L</variation>
    <location>
        <position position="152"/>
    </location>
</feature>
<feature type="sequence variant" id="VAR_018060" description="In RP3 and RPSRDF; dbSNP:rs137852550." evidence="15 21">
    <original>G</original>
    <variation>R</variation>
    <location>
        <position position="173"/>
    </location>
</feature>
<feature type="sequence variant" id="VAR_033259" description="In dbSNP:rs5963403.">
    <original>Q</original>
    <variation>H</variation>
    <location>
        <position position="184"/>
    </location>
</feature>
<feature type="sequence variant" id="VAR_008505" description="In RP3; reduces interaction with PDE6D; dbSNP:rs62650218." evidence="18 30 34">
    <original>G</original>
    <variation>V</variation>
    <location>
        <position position="215"/>
    </location>
</feature>
<feature type="sequence variant" id="VAR_006851" description="In RP3; reduces interaction with PDE6D; dbSNP:rs62638651." evidence="31 34">
    <original>P</original>
    <variation>S</variation>
    <location>
        <position position="235"/>
    </location>
</feature>
<feature type="sequence variant" id="VAR_008506" description="In RP3; reduces interaction with PDE6D; dbSNP:rs62650220." evidence="8 30 34">
    <original>C</original>
    <variation>R</variation>
    <location>
        <position position="250"/>
    </location>
</feature>
<feature type="sequence variant" id="VAR_018061" description="In RP3; dbSNP:rs1601961064." evidence="15">
    <original>C</original>
    <variation>Y</variation>
    <location>
        <position position="250"/>
    </location>
</feature>
<feature type="sequence variant" id="VAR_018062" description="In RP3." evidence="15">
    <location>
        <position position="258"/>
    </location>
</feature>
<feature type="sequence variant" id="VAR_008507" description="In RP3; uncertain significance; dbSNP:rs138018739." evidence="32">
    <original>A</original>
    <variation>G</variation>
    <location>
        <position position="262"/>
    </location>
</feature>
<feature type="sequence variant" id="VAR_018063" description="In RP3." evidence="24">
    <original>G</original>
    <variation>E</variation>
    <location>
        <position position="267"/>
    </location>
</feature>
<feature type="sequence variant" id="VAR_026127" description="In RP3; dbSNP:rs2147248035." evidence="15">
    <original>G</original>
    <variation>R</variation>
    <location>
        <position position="267"/>
    </location>
</feature>
<feature type="sequence variant" id="VAR_006852" description="In RP3; reduces interaction with PDE6D; dbSNP:rs62642057." evidence="31 34">
    <original>G</original>
    <variation>S</variation>
    <location>
        <position position="275"/>
    </location>
</feature>
<feature type="sequence variant" id="VAR_026128" description="In RP3." evidence="15">
    <original>E</original>
    <variation>G</variation>
    <location>
        <position position="285"/>
    </location>
</feature>
<feature type="sequence variant" id="VAR_013626" description="In RP3; dbSNP:rs62640587." evidence="6">
    <original>I</original>
    <variation>V</variation>
    <location>
        <position position="289"/>
    </location>
</feature>
<feature type="sequence variant" id="VAR_013627" description="In RP3." evidence="30">
    <location>
        <begin position="296"/>
        <end position="300"/>
    </location>
</feature>
<feature type="sequence variant" id="VAR_011561" description="In RP3; dbSNP:rs62640589." evidence="7">
    <original>C</original>
    <variation>R</variation>
    <location>
        <position position="302"/>
    </location>
</feature>
<feature type="sequence variant" id="VAR_018064" description="In RP3; dbSNP:rs62640590." evidence="9">
    <original>C</original>
    <variation>Y</variation>
    <location>
        <position position="302"/>
    </location>
</feature>
<feature type="sequence variant" id="VAR_018065" description="In RP3." evidence="20">
    <original>D</original>
    <variation>N</variation>
    <location>
        <position position="312"/>
    </location>
</feature>
<feature type="sequence variant" id="VAR_018066" description="In RP3." evidence="20">
    <original>D</original>
    <variation>Y</variation>
    <location>
        <position position="312"/>
    </location>
</feature>
<feature type="sequence variant" id="VAR_018067" description="In RP3; impairs protein folding; dbSNP:rs62640593." evidence="20 29">
    <original>G</original>
    <variation>R</variation>
    <location>
        <position position="320"/>
    </location>
</feature>
<feature type="sequence variant" id="VAR_018068" description="In dbSNP:rs41305223." evidence="9 14">
    <original>N</original>
    <variation>D</variation>
    <location>
        <position position="345"/>
    </location>
</feature>
<feature type="sequence variant" id="VAR_008508" description="In dbSNP:rs1801687." evidence="5 9 12 32">
    <original>R</original>
    <variation>K</variation>
    <location>
        <position position="425"/>
    </location>
</feature>
<feature type="sequence variant" id="VAR_008509" description="In dbSNP:rs62635003." evidence="9 32">
    <original>I</original>
    <variation>V</variation>
    <location>
        <position position="431"/>
    </location>
</feature>
<feature type="sequence variant" id="VAR_008510" description="In RP3; dbSNP:rs62635004." evidence="9 13 15">
    <original>G</original>
    <variation>D</variation>
    <location>
        <position position="436"/>
    </location>
</feature>
<feature type="sequence variant" id="VAR_011562" evidence="12">
    <location>
        <position position="526"/>
    </location>
</feature>
<feature type="sequence variant" id="VAR_011563" description="In dbSNP:rs41312104." evidence="12">
    <original>T</original>
    <variation>M</variation>
    <location>
        <position position="533"/>
    </location>
</feature>
<feature type="sequence variant" id="VAR_008511" description="In dbSNP:rs1801688." evidence="5 9 12 32">
    <original>G</original>
    <variation>E</variation>
    <location>
        <position position="566"/>
    </location>
</feature>
<feature type="mutagenesis site" description="Does not reduce interaction with PDE6D." evidence="34">
    <original>V</original>
    <variation>F</variation>
    <location>
        <position position="36"/>
    </location>
</feature>
<feature type="mutagenesis site" description="Abolishes interaction with RPGRIP1." evidence="29">
    <original>R</original>
    <variation>E</variation>
    <location>
        <position position="323"/>
    </location>
</feature>
<feature type="sequence conflict" description="In Ref. 4; CAB54002." evidence="39" ref="4">
    <original>MRE</original>
    <variation>MAKLRRSTTTAL</variation>
    <location>
        <begin position="1"/>
        <end position="3"/>
    </location>
</feature>
<feature type="sequence conflict" description="In Ref. 4; CAC86116." evidence="39" ref="4">
    <original>K</original>
    <variation>N</variation>
    <location>
        <position position="190"/>
    </location>
</feature>
<feature type="strand" evidence="42">
    <location>
        <begin position="13"/>
        <end position="20"/>
    </location>
</feature>
<feature type="helix" evidence="44">
    <location>
        <begin position="23"/>
        <end position="25"/>
    </location>
</feature>
<feature type="strand" evidence="42">
    <location>
        <begin position="26"/>
        <end position="30"/>
    </location>
</feature>
<feature type="strand" evidence="42">
    <location>
        <begin position="37"/>
        <end position="42"/>
    </location>
</feature>
<feature type="strand" evidence="42">
    <location>
        <begin position="44"/>
        <end position="51"/>
    </location>
</feature>
<feature type="strand" evidence="42">
    <location>
        <begin position="56"/>
        <end position="61"/>
    </location>
</feature>
<feature type="strand" evidence="43">
    <location>
        <begin position="69"/>
        <end position="71"/>
    </location>
</feature>
<feature type="strand" evidence="42">
    <location>
        <begin position="73"/>
        <end position="80"/>
    </location>
</feature>
<feature type="helix" evidence="42">
    <location>
        <begin position="82"/>
        <end position="84"/>
    </location>
</feature>
<feature type="strand" evidence="42">
    <location>
        <begin position="89"/>
        <end position="94"/>
    </location>
</feature>
<feature type="strand" evidence="42">
    <location>
        <begin position="96"/>
        <end position="103"/>
    </location>
</feature>
<feature type="strand" evidence="42">
    <location>
        <begin position="108"/>
        <end position="112"/>
    </location>
</feature>
<feature type="strand" evidence="42">
    <location>
        <begin position="121"/>
        <end position="123"/>
    </location>
</feature>
<feature type="strand" evidence="42">
    <location>
        <begin position="127"/>
        <end position="132"/>
    </location>
</feature>
<feature type="strand" evidence="42">
    <location>
        <begin position="142"/>
        <end position="147"/>
    </location>
</feature>
<feature type="strand" evidence="42">
    <location>
        <begin position="149"/>
        <end position="156"/>
    </location>
</feature>
<feature type="strand" evidence="42">
    <location>
        <begin position="161"/>
        <end position="166"/>
    </location>
</feature>
<feature type="strand" evidence="42">
    <location>
        <begin position="179"/>
        <end position="185"/>
    </location>
</feature>
<feature type="strand" evidence="42">
    <location>
        <begin position="188"/>
        <end position="190"/>
    </location>
</feature>
<feature type="strand" evidence="42">
    <location>
        <begin position="192"/>
        <end position="197"/>
    </location>
</feature>
<feature type="strand" evidence="42">
    <location>
        <begin position="199"/>
        <end position="206"/>
    </location>
</feature>
<feature type="strand" evidence="42">
    <location>
        <begin position="211"/>
        <end position="215"/>
    </location>
</feature>
<feature type="turn" evidence="42">
    <location>
        <begin position="219"/>
        <end position="222"/>
    </location>
</feature>
<feature type="helix" evidence="42">
    <location>
        <begin position="226"/>
        <end position="231"/>
    </location>
</feature>
<feature type="strand" evidence="42">
    <location>
        <begin position="245"/>
        <end position="250"/>
    </location>
</feature>
<feature type="strand" evidence="42">
    <location>
        <begin position="252"/>
        <end position="261"/>
    </location>
</feature>
<feature type="strand" evidence="42">
    <location>
        <begin position="263"/>
        <end position="268"/>
    </location>
</feature>
<feature type="strand" evidence="42">
    <location>
        <begin position="282"/>
        <end position="288"/>
    </location>
</feature>
<feature type="turn" evidence="42">
    <location>
        <begin position="291"/>
        <end position="294"/>
    </location>
</feature>
<feature type="strand" evidence="42">
    <location>
        <begin position="297"/>
        <end position="302"/>
    </location>
</feature>
<feature type="strand" evidence="42">
    <location>
        <begin position="304"/>
        <end position="311"/>
    </location>
</feature>
<feature type="strand" evidence="42">
    <location>
        <begin position="316"/>
        <end position="320"/>
    </location>
</feature>
<feature type="helix" evidence="42">
    <location>
        <begin position="323"/>
        <end position="325"/>
    </location>
</feature>
<feature type="strand" evidence="42">
    <location>
        <begin position="337"/>
        <end position="342"/>
    </location>
</feature>
<feature type="helix" evidence="42">
    <location>
        <begin position="344"/>
        <end position="346"/>
    </location>
</feature>
<feature type="strand" evidence="42">
    <location>
        <begin position="349"/>
        <end position="356"/>
    </location>
</feature>
<feature type="strand" evidence="42">
    <location>
        <begin position="358"/>
        <end position="367"/>
    </location>
</feature>
<feature type="sequence conflict" description="In Ref. 17; DAA05713." evidence="39" ref="17">
    <original>V</original>
    <variation>I</variation>
    <location sequence="Q92834-6">
        <position position="1144"/>
    </location>
</feature>
<keyword id="KW-0002">3D-structure</keyword>
<keyword id="KW-0025">Alternative splicing</keyword>
<keyword id="KW-0966">Cell projection</keyword>
<keyword id="KW-1186">Ciliopathy</keyword>
<keyword id="KW-0969">Cilium</keyword>
<keyword id="KW-0970">Cilium biogenesis/degradation</keyword>
<keyword id="KW-0182">Cone-rod dystrophy</keyword>
<keyword id="KW-0963">Cytoplasm</keyword>
<keyword id="KW-0206">Cytoskeleton</keyword>
<keyword id="KW-0209">Deafness</keyword>
<keyword id="KW-0225">Disease variant</keyword>
<keyword id="KW-0282">Flagellum</keyword>
<keyword id="KW-0333">Golgi apparatus</keyword>
<keyword id="KW-0344">Guanine-nucleotide releasing factor</keyword>
<keyword id="KW-0449">Lipoprotein</keyword>
<keyword id="KW-0488">Methylation</keyword>
<keyword id="KW-0597">Phosphoprotein</keyword>
<keyword id="KW-0636">Prenylation</keyword>
<keyword id="KW-1267">Proteomics identification</keyword>
<keyword id="KW-1185">Reference proteome</keyword>
<keyword id="KW-0677">Repeat</keyword>
<keyword id="KW-0682">Retinitis pigmentosa</keyword>
<keyword id="KW-0716">Sensory transduction</keyword>
<keyword id="KW-0844">Vision</keyword>
<gene>
    <name evidence="40" type="primary">RPGR</name>
    <name type="synonym">RP3</name>
    <name type="synonym">XLRP3</name>
</gene>